<name>SDHF2_YEAST</name>
<accession>Q08230</accession>
<accession>D6W1Z6</accession>
<organism>
    <name type="scientific">Saccharomyces cerevisiae (strain ATCC 204508 / S288c)</name>
    <name type="common">Baker's yeast</name>
    <dbReference type="NCBI Taxonomy" id="559292"/>
    <lineage>
        <taxon>Eukaryota</taxon>
        <taxon>Fungi</taxon>
        <taxon>Dikarya</taxon>
        <taxon>Ascomycota</taxon>
        <taxon>Saccharomycotina</taxon>
        <taxon>Saccharomycetes</taxon>
        <taxon>Saccharomycetales</taxon>
        <taxon>Saccharomycetaceae</taxon>
        <taxon>Saccharomyces</taxon>
    </lineage>
</organism>
<comment type="function">
    <text evidence="1 2 3 7 9">Plays an essential role in the assembly of succinate dehydrogenase (SDH), an enzyme complex (also referred to as respiratory complex II) that is a component of both the tricarboxylic acid (TCA) cycle and the mitochondrial electron transport chain, and which couples the oxidation of succinate to fumarate with the reduction of ubiquinone (coenzyme Q) to ubiquinol. Required for flavinylation (covalent attachment of FAD) of the flavoprotein subunit SDH1 of the SDH catalytic dimer. It is unclear whether it participates in the chemistry of FAD attachment (enzymatic function) or acts as a chaperone that maintains SDH1 in a conformation that is susceptible to autocatalytic FAD attachment (PubMed:19628817). Does not bind FAD or FADH(2) in vitro (PubMed:23062074). Involved in sporulation (PubMed:12432101). Required for the full activation of the early meiotic inducer IME1 (PubMed:12586695).</text>
</comment>
<comment type="subunit">
    <text evidence="1 7">Interacts with SDH1 within the SDH catalytic dimer.</text>
</comment>
<comment type="subcellular location">
    <subcellularLocation>
        <location evidence="1 4 6 7">Mitochondrion matrix</location>
    </subcellularLocation>
</comment>
<comment type="disruption phenotype">
    <text evidence="7">Respiratory deficient phenotype: viable on glucose medium, but is inviable on non-fermentable carbon sources such as glycerol. Cells lack SDH activity due to a complete loss of FAD cofactor attachment of SDH1.</text>
</comment>
<comment type="miscellaneous">
    <text evidence="5">Present with 1080 molecules/cell in log phase SD medium.</text>
</comment>
<comment type="similarity">
    <text evidence="1">Belongs to the SDHAF2 family.</text>
</comment>
<sequence length="162" mass="19042">MHNMFPALTKTLSLQGYKIINSQTGSAAWSCGRRWFSSDKDDHDDVVTRIKIAPIKRTNEPLDKKRARLIYQSRKRGILETDLLLSGFAAKYLKKMNEEELEEYDSLLNELDWDIYYWATKNFKTSPLPDKWANSKLLKQLQEFSENKEKEILSMPDLSKYQ</sequence>
<protein>
    <recommendedName>
        <fullName evidence="1 12">Succinate dehydrogenase assembly factor 2, mitochondrial</fullName>
        <shortName evidence="1">SDH assembly factor 2</shortName>
        <shortName evidence="1 12">SDHAF2</shortName>
    </recommendedName>
</protein>
<evidence type="ECO:0000255" key="1">
    <source>
        <dbReference type="HAMAP-Rule" id="MF_03057"/>
    </source>
</evidence>
<evidence type="ECO:0000269" key="2">
    <source>
    </source>
</evidence>
<evidence type="ECO:0000269" key="3">
    <source>
    </source>
</evidence>
<evidence type="ECO:0000269" key="4">
    <source>
    </source>
</evidence>
<evidence type="ECO:0000269" key="5">
    <source>
    </source>
</evidence>
<evidence type="ECO:0000269" key="6">
    <source>
    </source>
</evidence>
<evidence type="ECO:0000269" key="7">
    <source>
    </source>
</evidence>
<evidence type="ECO:0000269" key="8">
    <source>
    </source>
</evidence>
<evidence type="ECO:0000269" key="9">
    <source>
    </source>
</evidence>
<evidence type="ECO:0000303" key="10">
    <source>
    </source>
</evidence>
<evidence type="ECO:0000303" key="11">
    <source>
    </source>
</evidence>
<evidence type="ECO:0000303" key="12">
    <source>
    </source>
</evidence>
<evidence type="ECO:0000312" key="13">
    <source>
        <dbReference type="SGD" id="S000005432"/>
    </source>
</evidence>
<evidence type="ECO:0007829" key="14">
    <source>
        <dbReference type="PDB" id="2LM4"/>
    </source>
</evidence>
<proteinExistence type="evidence at protein level"/>
<gene>
    <name evidence="1 11" type="primary">SDH5</name>
    <name evidence="10" type="synonym">EMI5</name>
    <name evidence="13" type="ordered locus">YOL071W</name>
</gene>
<feature type="transit peptide" description="Mitochondrion" evidence="8">
    <location>
        <begin position="1"/>
        <end position="35"/>
    </location>
</feature>
<feature type="chain" id="PRO_0000007814" description="Succinate dehydrogenase assembly factor 2, mitochondrial">
    <location>
        <begin position="36"/>
        <end position="162"/>
    </location>
</feature>
<feature type="mutagenesis site" description="Loss of covalent FAD in SDH1." evidence="9">
    <original>R</original>
    <variation>E</variation>
    <location>
        <position position="68"/>
    </location>
</feature>
<feature type="mutagenesis site" description="Loss of covalent FAD in SDH1." evidence="9">
    <original>Y</original>
    <variation>D</variation>
    <location>
        <position position="71"/>
    </location>
</feature>
<feature type="mutagenesis site" description="No effect." evidence="9">
    <original>EE</original>
    <variation>KK</variation>
    <location>
        <begin position="98"/>
        <end position="99"/>
    </location>
</feature>
<feature type="mutagenesis site" description="Loss of covalent FAD in SDH1." evidence="9">
    <original>W</original>
    <variation>A</variation>
    <location>
        <position position="113"/>
    </location>
</feature>
<feature type="helix" evidence="14">
    <location>
        <begin position="62"/>
        <end position="73"/>
    </location>
</feature>
<feature type="helix" evidence="14">
    <location>
        <begin position="79"/>
        <end position="95"/>
    </location>
</feature>
<feature type="helix" evidence="14">
    <location>
        <begin position="98"/>
        <end position="108"/>
    </location>
</feature>
<feature type="helix" evidence="14">
    <location>
        <begin position="112"/>
        <end position="119"/>
    </location>
</feature>
<feature type="turn" evidence="14">
    <location>
        <begin position="123"/>
        <end position="125"/>
    </location>
</feature>
<feature type="helix" evidence="14">
    <location>
        <begin position="130"/>
        <end position="133"/>
    </location>
</feature>
<feature type="helix" evidence="14">
    <location>
        <begin position="136"/>
        <end position="147"/>
    </location>
</feature>
<keyword id="KW-0002">3D-structure</keyword>
<keyword id="KW-0143">Chaperone</keyword>
<keyword id="KW-0496">Mitochondrion</keyword>
<keyword id="KW-1185">Reference proteome</keyword>
<keyword id="KW-0809">Transit peptide</keyword>
<reference key="1">
    <citation type="journal article" date="1997" name="Nature">
        <title>The nucleotide sequence of Saccharomyces cerevisiae chromosome XV.</title>
        <authorList>
            <person name="Dujon B."/>
            <person name="Albermann K."/>
            <person name="Aldea M."/>
            <person name="Alexandraki D."/>
            <person name="Ansorge W."/>
            <person name="Arino J."/>
            <person name="Benes V."/>
            <person name="Bohn C."/>
            <person name="Bolotin-Fukuhara M."/>
            <person name="Bordonne R."/>
            <person name="Boyer J."/>
            <person name="Camasses A."/>
            <person name="Casamayor A."/>
            <person name="Casas C."/>
            <person name="Cheret G."/>
            <person name="Cziepluch C."/>
            <person name="Daignan-Fornier B."/>
            <person name="Dang V.-D."/>
            <person name="de Haan M."/>
            <person name="Delius H."/>
            <person name="Durand P."/>
            <person name="Fairhead C."/>
            <person name="Feldmann H."/>
            <person name="Gaillon L."/>
            <person name="Galisson F."/>
            <person name="Gamo F.-J."/>
            <person name="Gancedo C."/>
            <person name="Goffeau A."/>
            <person name="Goulding S.E."/>
            <person name="Grivell L.A."/>
            <person name="Habbig B."/>
            <person name="Hand N.J."/>
            <person name="Hani J."/>
            <person name="Hattenhorst U."/>
            <person name="Hebling U."/>
            <person name="Hernando Y."/>
            <person name="Herrero E."/>
            <person name="Heumann K."/>
            <person name="Hiesel R."/>
            <person name="Hilger F."/>
            <person name="Hofmann B."/>
            <person name="Hollenberg C.P."/>
            <person name="Hughes B."/>
            <person name="Jauniaux J.-C."/>
            <person name="Kalogeropoulos A."/>
            <person name="Katsoulou C."/>
            <person name="Kordes E."/>
            <person name="Lafuente M.J."/>
            <person name="Landt O."/>
            <person name="Louis E.J."/>
            <person name="Maarse A.C."/>
            <person name="Madania A."/>
            <person name="Mannhaupt G."/>
            <person name="Marck C."/>
            <person name="Martin R.P."/>
            <person name="Mewes H.-W."/>
            <person name="Michaux G."/>
            <person name="Paces V."/>
            <person name="Parle-McDermott A.G."/>
            <person name="Pearson B.M."/>
            <person name="Perrin A."/>
            <person name="Pettersson B."/>
            <person name="Poch O."/>
            <person name="Pohl T.M."/>
            <person name="Poirey R."/>
            <person name="Portetelle D."/>
            <person name="Pujol A."/>
            <person name="Purnelle B."/>
            <person name="Ramezani Rad M."/>
            <person name="Rechmann S."/>
            <person name="Schwager C."/>
            <person name="Schweizer M."/>
            <person name="Sor F."/>
            <person name="Sterky F."/>
            <person name="Tarassov I.A."/>
            <person name="Teodoru C."/>
            <person name="Tettelin H."/>
            <person name="Thierry A."/>
            <person name="Tobiasch E."/>
            <person name="Tzermia M."/>
            <person name="Uhlen M."/>
            <person name="Unseld M."/>
            <person name="Valens M."/>
            <person name="Vandenbol M."/>
            <person name="Vetter I."/>
            <person name="Vlcek C."/>
            <person name="Voet M."/>
            <person name="Volckaert G."/>
            <person name="Voss H."/>
            <person name="Wambutt R."/>
            <person name="Wedler H."/>
            <person name="Wiemann S."/>
            <person name="Winsor B."/>
            <person name="Wolfe K.H."/>
            <person name="Zollner A."/>
            <person name="Zumstein E."/>
            <person name="Kleine K."/>
        </authorList>
    </citation>
    <scope>NUCLEOTIDE SEQUENCE [LARGE SCALE GENOMIC DNA]</scope>
    <source>
        <strain>ATCC 204508 / S288c</strain>
    </source>
</reference>
<reference key="2">
    <citation type="journal article" date="2014" name="G3 (Bethesda)">
        <title>The reference genome sequence of Saccharomyces cerevisiae: Then and now.</title>
        <authorList>
            <person name="Engel S.R."/>
            <person name="Dietrich F.S."/>
            <person name="Fisk D.G."/>
            <person name="Binkley G."/>
            <person name="Balakrishnan R."/>
            <person name="Costanzo M.C."/>
            <person name="Dwight S.S."/>
            <person name="Hitz B.C."/>
            <person name="Karra K."/>
            <person name="Nash R.S."/>
            <person name="Weng S."/>
            <person name="Wong E.D."/>
            <person name="Lloyd P."/>
            <person name="Skrzypek M.S."/>
            <person name="Miyasato S.R."/>
            <person name="Simison M."/>
            <person name="Cherry J.M."/>
        </authorList>
    </citation>
    <scope>GENOME REANNOTATION</scope>
    <source>
        <strain>ATCC 204508 / S288c</strain>
    </source>
</reference>
<reference key="3">
    <citation type="journal article" date="2002" name="Proc. Natl. Acad. Sci. U.S.A.">
        <title>Parallel phenotypic analysis of sporulation and postgermination growth in Saccharomyces cerevisiae.</title>
        <authorList>
            <person name="Deutschbauer A.M."/>
            <person name="Williams R.M."/>
            <person name="Chu A.M."/>
            <person name="Davis R.W."/>
        </authorList>
    </citation>
    <scope>FUNCTION</scope>
</reference>
<reference key="4">
    <citation type="journal article" date="2003" name="Genetics">
        <title>Large-scale functional genomic analysis of sporulation and meiosis in Saccharomyces cerevisiae.</title>
        <authorList>
            <person name="Enyenihi A.H."/>
            <person name="Saunders W.S."/>
        </authorList>
    </citation>
    <scope>FUNCTION</scope>
</reference>
<reference key="5">
    <citation type="journal article" date="2003" name="Nature">
        <title>Global analysis of protein localization in budding yeast.</title>
        <authorList>
            <person name="Huh W.-K."/>
            <person name="Falvo J.V."/>
            <person name="Gerke L.C."/>
            <person name="Carroll A.S."/>
            <person name="Howson R.W."/>
            <person name="Weissman J.S."/>
            <person name="O'Shea E.K."/>
        </authorList>
    </citation>
    <scope>SUBCELLULAR LOCATION [LARGE SCALE ANALYSIS]</scope>
</reference>
<reference key="6">
    <citation type="journal article" date="2003" name="Nature">
        <title>Global analysis of protein expression in yeast.</title>
        <authorList>
            <person name="Ghaemmaghami S."/>
            <person name="Huh W.-K."/>
            <person name="Bower K."/>
            <person name="Howson R.W."/>
            <person name="Belle A."/>
            <person name="Dephoure N."/>
            <person name="O'Shea E.K."/>
            <person name="Weissman J.S."/>
        </authorList>
    </citation>
    <scope>LEVEL OF PROTEIN EXPRESSION [LARGE SCALE ANALYSIS]</scope>
</reference>
<reference key="7">
    <citation type="journal article" date="2003" name="Proc. Natl. Acad. Sci. U.S.A.">
        <title>The proteome of Saccharomyces cerevisiae mitochondria.</title>
        <authorList>
            <person name="Sickmann A."/>
            <person name="Reinders J."/>
            <person name="Wagner Y."/>
            <person name="Joppich C."/>
            <person name="Zahedi R.P."/>
            <person name="Meyer H.E."/>
            <person name="Schoenfisch B."/>
            <person name="Perschil I."/>
            <person name="Chacinska A."/>
            <person name="Guiard B."/>
            <person name="Rehling P."/>
            <person name="Pfanner N."/>
            <person name="Meisinger C."/>
        </authorList>
    </citation>
    <scope>SUBCELLULAR LOCATION [LARGE SCALE ANALYSIS]</scope>
    <source>
        <strain>ATCC 76625 / YPH499</strain>
    </source>
</reference>
<reference key="8">
    <citation type="journal article" date="2009" name="Cell">
        <title>Global analysis of the mitochondrial N-proteome identifies a processing peptidase critical for protein stability.</title>
        <authorList>
            <person name="Vogtle F.N."/>
            <person name="Wortelkamp S."/>
            <person name="Zahedi R.P."/>
            <person name="Becker D."/>
            <person name="Leidhold C."/>
            <person name="Gevaert K."/>
            <person name="Kellermann J."/>
            <person name="Voos W."/>
            <person name="Sickmann A."/>
            <person name="Pfanner N."/>
            <person name="Meisinger C."/>
        </authorList>
    </citation>
    <scope>IDENTIFICATION OF MATURE N-TERMINUS</scope>
    <scope>MASS SPECTROMETRY</scope>
</reference>
<reference key="9">
    <citation type="journal article" date="2009" name="Science">
        <title>SDH5, a gene required for flavination of succinate dehydrogenase, is mutated in paraganglioma.</title>
        <authorList>
            <person name="Hao H.-X."/>
            <person name="Khalimonchuk O."/>
            <person name="Schraders M."/>
            <person name="Dephoure N."/>
            <person name="Bayley J.-P."/>
            <person name="Kunst H."/>
            <person name="Devilee P."/>
            <person name="Cremers C.W.R.J."/>
            <person name="Schiffman J.D."/>
            <person name="Bentz B.G."/>
            <person name="Gygi S.P."/>
            <person name="Winge D.R."/>
            <person name="Kremer H."/>
            <person name="Rutter J."/>
        </authorList>
    </citation>
    <scope>FUNCTION</scope>
    <scope>SUBCELLULAR LOCATION</scope>
    <scope>DISRUPTION PHENOTYPE</scope>
    <scope>INTERACTION WITH SDH1</scope>
</reference>
<reference key="10">
    <citation type="journal article" date="2012" name="Biochemistry">
        <title>Solution NMR structure of yeast succinate dehydrogenase flavinylation factor Sdh5 reveals a putative Sdh1 binding site.</title>
        <authorList>
            <person name="Eletsky A."/>
            <person name="Jeong M.Y."/>
            <person name="Kim H."/>
            <person name="Lee H.W."/>
            <person name="Xiao R."/>
            <person name="Pagliarini D.J."/>
            <person name="Prestegard J.H."/>
            <person name="Winge D.R."/>
            <person name="Montelione G.T."/>
            <person name="Szyperski T."/>
        </authorList>
    </citation>
    <scope>STRUCTURE BY NMR OF 1-54</scope>
    <scope>FUNCTION</scope>
    <scope>MUTAGENESIS OF ARG-68; TYR-71; 98-GLU-GLU-99 AND TRP-113</scope>
</reference>
<dbReference type="EMBL" id="Z74813">
    <property type="protein sequence ID" value="CAA99081.1"/>
    <property type="molecule type" value="Genomic_DNA"/>
</dbReference>
<dbReference type="EMBL" id="BK006948">
    <property type="protein sequence ID" value="DAA10712.1"/>
    <property type="molecule type" value="Genomic_DNA"/>
</dbReference>
<dbReference type="PIR" id="S66764">
    <property type="entry name" value="S66764"/>
</dbReference>
<dbReference type="RefSeq" id="NP_014570.1">
    <property type="nucleotide sequence ID" value="NM_001183326.1"/>
</dbReference>
<dbReference type="PDB" id="2LM4">
    <property type="method" value="NMR"/>
    <property type="chains" value="A=55-152"/>
</dbReference>
<dbReference type="PDBsum" id="2LM4"/>
<dbReference type="BMRB" id="Q08230"/>
<dbReference type="SMR" id="Q08230"/>
<dbReference type="BioGRID" id="34330">
    <property type="interactions" value="106"/>
</dbReference>
<dbReference type="DIP" id="DIP-61727N"/>
<dbReference type="FunCoup" id="Q08230">
    <property type="interactions" value="405"/>
</dbReference>
<dbReference type="IntAct" id="Q08230">
    <property type="interactions" value="2"/>
</dbReference>
<dbReference type="STRING" id="4932.YOL071W"/>
<dbReference type="iPTMnet" id="Q08230"/>
<dbReference type="PaxDb" id="4932-YOL071W"/>
<dbReference type="PeptideAtlas" id="Q08230"/>
<dbReference type="DNASU" id="854083"/>
<dbReference type="EnsemblFungi" id="YOL071W_mRNA">
    <property type="protein sequence ID" value="YOL071W"/>
    <property type="gene ID" value="YOL071W"/>
</dbReference>
<dbReference type="GeneID" id="854083"/>
<dbReference type="KEGG" id="sce:YOL071W"/>
<dbReference type="AGR" id="SGD:S000005432"/>
<dbReference type="SGD" id="S000005432">
    <property type="gene designation" value="SDH5"/>
</dbReference>
<dbReference type="VEuPathDB" id="FungiDB:YOL071W"/>
<dbReference type="eggNOG" id="KOG3326">
    <property type="taxonomic scope" value="Eukaryota"/>
</dbReference>
<dbReference type="GeneTree" id="ENSGT00390000001149"/>
<dbReference type="HOGENOM" id="CLU_103054_0_1_1"/>
<dbReference type="InParanoid" id="Q08230"/>
<dbReference type="OMA" id="YGKPQNP"/>
<dbReference type="OrthoDB" id="284292at2759"/>
<dbReference type="BioCyc" id="YEAST:G3O-33476-MONOMER"/>
<dbReference type="Reactome" id="R-SCE-9854311">
    <property type="pathway name" value="Maturation of TCA enzymes and regulation of TCA cycle"/>
</dbReference>
<dbReference type="BioGRID-ORCS" id="854083">
    <property type="hits" value="10 hits in 10 CRISPR screens"/>
</dbReference>
<dbReference type="EvolutionaryTrace" id="Q08230"/>
<dbReference type="PRO" id="PR:Q08230"/>
<dbReference type="Proteomes" id="UP000002311">
    <property type="component" value="Chromosome XV"/>
</dbReference>
<dbReference type="RNAct" id="Q08230">
    <property type="molecule type" value="protein"/>
</dbReference>
<dbReference type="GO" id="GO:0005759">
    <property type="term" value="C:mitochondrial matrix"/>
    <property type="evidence" value="ECO:0000314"/>
    <property type="project" value="UniProtKB"/>
</dbReference>
<dbReference type="GO" id="GO:0005739">
    <property type="term" value="C:mitochondrion"/>
    <property type="evidence" value="ECO:0007005"/>
    <property type="project" value="SGD"/>
</dbReference>
<dbReference type="GO" id="GO:0030437">
    <property type="term" value="P:ascospore formation"/>
    <property type="evidence" value="ECO:0007001"/>
    <property type="project" value="SGD"/>
</dbReference>
<dbReference type="GO" id="GO:0006121">
    <property type="term" value="P:mitochondrial electron transport, succinate to ubiquinone"/>
    <property type="evidence" value="ECO:0000315"/>
    <property type="project" value="UniProtKB"/>
</dbReference>
<dbReference type="GO" id="GO:0034553">
    <property type="term" value="P:mitochondrial respiratory chain complex II assembly"/>
    <property type="evidence" value="ECO:0000315"/>
    <property type="project" value="SGD"/>
</dbReference>
<dbReference type="GO" id="GO:0017013">
    <property type="term" value="P:protein flavinylation"/>
    <property type="evidence" value="ECO:0000315"/>
    <property type="project" value="UniProtKB"/>
</dbReference>
<dbReference type="GO" id="GO:0018293">
    <property type="term" value="P:protein-FAD linkage"/>
    <property type="evidence" value="ECO:0000315"/>
    <property type="project" value="UniProtKB"/>
</dbReference>
<dbReference type="GO" id="GO:0006099">
    <property type="term" value="P:tricarboxylic acid cycle"/>
    <property type="evidence" value="ECO:0000353"/>
    <property type="project" value="SGD"/>
</dbReference>
<dbReference type="FunFam" id="1.10.150.250:FF:000002">
    <property type="entry name" value="Succinate dehydrogenase assembly factor 2, mitochondrial"/>
    <property type="match status" value="1"/>
</dbReference>
<dbReference type="Gene3D" id="1.10.150.250">
    <property type="entry name" value="Flavinator of succinate dehydrogenase"/>
    <property type="match status" value="1"/>
</dbReference>
<dbReference type="HAMAP" id="MF_03057">
    <property type="entry name" value="SDHAF2"/>
    <property type="match status" value="1"/>
</dbReference>
<dbReference type="InterPro" id="IPR005631">
    <property type="entry name" value="SDH"/>
</dbReference>
<dbReference type="InterPro" id="IPR036714">
    <property type="entry name" value="SDH_sf"/>
</dbReference>
<dbReference type="InterPro" id="IPR028882">
    <property type="entry name" value="SDHAF2"/>
</dbReference>
<dbReference type="PANTHER" id="PTHR12469">
    <property type="entry name" value="PROTEIN EMI5 HOMOLOG, MITOCHONDRIAL"/>
    <property type="match status" value="1"/>
</dbReference>
<dbReference type="PANTHER" id="PTHR12469:SF2">
    <property type="entry name" value="SUCCINATE DEHYDROGENASE ASSEMBLY FACTOR 2, MITOCHONDRIAL"/>
    <property type="match status" value="1"/>
</dbReference>
<dbReference type="Pfam" id="PF03937">
    <property type="entry name" value="Sdh5"/>
    <property type="match status" value="1"/>
</dbReference>
<dbReference type="SUPFAM" id="SSF109910">
    <property type="entry name" value="YgfY-like"/>
    <property type="match status" value="1"/>
</dbReference>